<accession>A1SSB8</accession>
<gene>
    <name evidence="1" type="primary">rlmD</name>
    <name type="synonym">rumA</name>
    <name type="ordered locus">Ping_0529</name>
</gene>
<evidence type="ECO:0000255" key="1">
    <source>
        <dbReference type="HAMAP-Rule" id="MF_01010"/>
    </source>
</evidence>
<reference key="1">
    <citation type="journal article" date="2008" name="BMC Genomics">
        <title>Genomics of an extreme psychrophile, Psychromonas ingrahamii.</title>
        <authorList>
            <person name="Riley M."/>
            <person name="Staley J.T."/>
            <person name="Danchin A."/>
            <person name="Wang T.Z."/>
            <person name="Brettin T.S."/>
            <person name="Hauser L.J."/>
            <person name="Land M.L."/>
            <person name="Thompson L.S."/>
        </authorList>
    </citation>
    <scope>NUCLEOTIDE SEQUENCE [LARGE SCALE GENOMIC DNA]</scope>
    <source>
        <strain>DSM 17664 / CCUG 51855 / 37</strain>
    </source>
</reference>
<sequence>MAQFFKAAPTNSIKNHILKNIKVEKLDHRGRGLAYFQNKPLFIDGALAGELLEVQIVESKKRYSKGKIKKIIKASELRITAACPHYQECGGCDLQHLNQAAQIQIKSDGLLSLFQRFAKKVPQQLEKPIIDKAWEYRRTARFGLQFDKKNKQLKMGLRRAQSNELIDQKVCPVLLPELECLIPPLKILLNSLQCKAHLGHVELLYADQGAVVLLRHMKTLTSPDLQLITAFSALQKVNFFGQASSNQSVCLAGEANLSYRLPEWDCSLSFTPTDFLQVNSDINKKMVSQAMQWLALEKNDSVLDLFCGLGNFTLPIARQVESVVGIEGVQQMVDRATANAQLNNLQNARFYQADLSGENLIEQEWANQNFNKVLLDPARAGALDCLAFIAQKKPSHILYVSCDPLTLARDSQVLLDKGYKLDKLGLLDMFPQTAHMESMALFTG</sequence>
<dbReference type="EC" id="2.1.1.190" evidence="1"/>
<dbReference type="EMBL" id="CP000510">
    <property type="protein sequence ID" value="ABM02383.1"/>
    <property type="molecule type" value="Genomic_DNA"/>
</dbReference>
<dbReference type="RefSeq" id="WP_011768942.1">
    <property type="nucleotide sequence ID" value="NC_008709.1"/>
</dbReference>
<dbReference type="SMR" id="A1SSB8"/>
<dbReference type="STRING" id="357804.Ping_0529"/>
<dbReference type="KEGG" id="pin:Ping_0529"/>
<dbReference type="eggNOG" id="COG2265">
    <property type="taxonomic scope" value="Bacteria"/>
</dbReference>
<dbReference type="HOGENOM" id="CLU_014689_8_2_6"/>
<dbReference type="OrthoDB" id="9804590at2"/>
<dbReference type="Proteomes" id="UP000000639">
    <property type="component" value="Chromosome"/>
</dbReference>
<dbReference type="GO" id="GO:0051539">
    <property type="term" value="F:4 iron, 4 sulfur cluster binding"/>
    <property type="evidence" value="ECO:0007669"/>
    <property type="project" value="UniProtKB-KW"/>
</dbReference>
<dbReference type="GO" id="GO:0005506">
    <property type="term" value="F:iron ion binding"/>
    <property type="evidence" value="ECO:0007669"/>
    <property type="project" value="UniProtKB-UniRule"/>
</dbReference>
<dbReference type="GO" id="GO:0003723">
    <property type="term" value="F:RNA binding"/>
    <property type="evidence" value="ECO:0007669"/>
    <property type="project" value="InterPro"/>
</dbReference>
<dbReference type="GO" id="GO:0070041">
    <property type="term" value="F:rRNA (uridine-C5-)-methyltransferase activity"/>
    <property type="evidence" value="ECO:0007669"/>
    <property type="project" value="UniProtKB-UniRule"/>
</dbReference>
<dbReference type="GO" id="GO:0070475">
    <property type="term" value="P:rRNA base methylation"/>
    <property type="evidence" value="ECO:0007669"/>
    <property type="project" value="TreeGrafter"/>
</dbReference>
<dbReference type="CDD" id="cd02440">
    <property type="entry name" value="AdoMet_MTases"/>
    <property type="match status" value="1"/>
</dbReference>
<dbReference type="FunFam" id="3.40.50.150:FF:000009">
    <property type="entry name" value="23S rRNA (Uracil(1939)-C(5))-methyltransferase RlmD"/>
    <property type="match status" value="1"/>
</dbReference>
<dbReference type="FunFam" id="2.40.50.140:FF:000097">
    <property type="entry name" value="23S rRNA (uracil(1939)-C(5))-methyltransferase RlmD"/>
    <property type="match status" value="1"/>
</dbReference>
<dbReference type="Gene3D" id="2.40.50.1070">
    <property type="match status" value="1"/>
</dbReference>
<dbReference type="Gene3D" id="2.40.50.140">
    <property type="entry name" value="Nucleic acid-binding proteins"/>
    <property type="match status" value="1"/>
</dbReference>
<dbReference type="Gene3D" id="3.40.50.150">
    <property type="entry name" value="Vaccinia Virus protein VP39"/>
    <property type="match status" value="1"/>
</dbReference>
<dbReference type="HAMAP" id="MF_01010">
    <property type="entry name" value="23SrRNA_methyltr_RlmD"/>
    <property type="match status" value="1"/>
</dbReference>
<dbReference type="InterPro" id="IPR001566">
    <property type="entry name" value="23S_rRNA_MeTrfase_RlmD"/>
</dbReference>
<dbReference type="InterPro" id="IPR030390">
    <property type="entry name" value="MeTrfase_TrmA_AS"/>
</dbReference>
<dbReference type="InterPro" id="IPR030391">
    <property type="entry name" value="MeTrfase_TrmA_CS"/>
</dbReference>
<dbReference type="InterPro" id="IPR012340">
    <property type="entry name" value="NA-bd_OB-fold"/>
</dbReference>
<dbReference type="InterPro" id="IPR029063">
    <property type="entry name" value="SAM-dependent_MTases_sf"/>
</dbReference>
<dbReference type="InterPro" id="IPR002792">
    <property type="entry name" value="TRAM_dom"/>
</dbReference>
<dbReference type="InterPro" id="IPR010280">
    <property type="entry name" value="U5_MeTrfase_fam"/>
</dbReference>
<dbReference type="NCBIfam" id="NF009639">
    <property type="entry name" value="PRK13168.1"/>
    <property type="match status" value="1"/>
</dbReference>
<dbReference type="NCBIfam" id="TIGR00479">
    <property type="entry name" value="rumA"/>
    <property type="match status" value="1"/>
</dbReference>
<dbReference type="PANTHER" id="PTHR11061:SF49">
    <property type="entry name" value="23S RRNA (URACIL(1939)-C(5))-METHYLTRANSFERASE RLMD"/>
    <property type="match status" value="1"/>
</dbReference>
<dbReference type="PANTHER" id="PTHR11061">
    <property type="entry name" value="RNA M5U METHYLTRANSFERASE"/>
    <property type="match status" value="1"/>
</dbReference>
<dbReference type="Pfam" id="PF01938">
    <property type="entry name" value="TRAM"/>
    <property type="match status" value="1"/>
</dbReference>
<dbReference type="Pfam" id="PF05958">
    <property type="entry name" value="tRNA_U5-meth_tr"/>
    <property type="match status" value="1"/>
</dbReference>
<dbReference type="SUPFAM" id="SSF50249">
    <property type="entry name" value="Nucleic acid-binding proteins"/>
    <property type="match status" value="1"/>
</dbReference>
<dbReference type="SUPFAM" id="SSF53335">
    <property type="entry name" value="S-adenosyl-L-methionine-dependent methyltransferases"/>
    <property type="match status" value="1"/>
</dbReference>
<dbReference type="PROSITE" id="PS51687">
    <property type="entry name" value="SAM_MT_RNA_M5U"/>
    <property type="match status" value="1"/>
</dbReference>
<dbReference type="PROSITE" id="PS50926">
    <property type="entry name" value="TRAM"/>
    <property type="match status" value="1"/>
</dbReference>
<dbReference type="PROSITE" id="PS01230">
    <property type="entry name" value="TRMA_1"/>
    <property type="match status" value="1"/>
</dbReference>
<dbReference type="PROSITE" id="PS01231">
    <property type="entry name" value="TRMA_2"/>
    <property type="match status" value="1"/>
</dbReference>
<proteinExistence type="inferred from homology"/>
<keyword id="KW-0004">4Fe-4S</keyword>
<keyword id="KW-0408">Iron</keyword>
<keyword id="KW-0411">Iron-sulfur</keyword>
<keyword id="KW-0479">Metal-binding</keyword>
<keyword id="KW-0489">Methyltransferase</keyword>
<keyword id="KW-1185">Reference proteome</keyword>
<keyword id="KW-0698">rRNA processing</keyword>
<keyword id="KW-0949">S-adenosyl-L-methionine</keyword>
<keyword id="KW-0808">Transferase</keyword>
<feature type="chain" id="PRO_0000282056" description="23S rRNA (uracil(1939)-C(5))-methyltransferase RlmD">
    <location>
        <begin position="1"/>
        <end position="444"/>
    </location>
</feature>
<feature type="domain" description="TRAM" evidence="1">
    <location>
        <begin position="11"/>
        <end position="70"/>
    </location>
</feature>
<feature type="active site" description="Nucleophile" evidence="1">
    <location>
        <position position="402"/>
    </location>
</feature>
<feature type="binding site" evidence="1">
    <location>
        <position position="83"/>
    </location>
    <ligand>
        <name>[4Fe-4S] cluster</name>
        <dbReference type="ChEBI" id="CHEBI:49883"/>
    </ligand>
</feature>
<feature type="binding site" evidence="1">
    <location>
        <position position="89"/>
    </location>
    <ligand>
        <name>[4Fe-4S] cluster</name>
        <dbReference type="ChEBI" id="CHEBI:49883"/>
    </ligand>
</feature>
<feature type="binding site" evidence="1">
    <location>
        <position position="92"/>
    </location>
    <ligand>
        <name>[4Fe-4S] cluster</name>
        <dbReference type="ChEBI" id="CHEBI:49883"/>
    </ligand>
</feature>
<feature type="binding site" evidence="1">
    <location>
        <position position="171"/>
    </location>
    <ligand>
        <name>[4Fe-4S] cluster</name>
        <dbReference type="ChEBI" id="CHEBI:49883"/>
    </ligand>
</feature>
<feature type="binding site" evidence="1">
    <location>
        <position position="277"/>
    </location>
    <ligand>
        <name>S-adenosyl-L-methionine</name>
        <dbReference type="ChEBI" id="CHEBI:59789"/>
    </ligand>
</feature>
<feature type="binding site" evidence="1">
    <location>
        <position position="306"/>
    </location>
    <ligand>
        <name>S-adenosyl-L-methionine</name>
        <dbReference type="ChEBI" id="CHEBI:59789"/>
    </ligand>
</feature>
<feature type="binding site" evidence="1">
    <location>
        <position position="311"/>
    </location>
    <ligand>
        <name>S-adenosyl-L-methionine</name>
        <dbReference type="ChEBI" id="CHEBI:59789"/>
    </ligand>
</feature>
<feature type="binding site" evidence="1">
    <location>
        <position position="327"/>
    </location>
    <ligand>
        <name>S-adenosyl-L-methionine</name>
        <dbReference type="ChEBI" id="CHEBI:59789"/>
    </ligand>
</feature>
<feature type="binding site" evidence="1">
    <location>
        <position position="354"/>
    </location>
    <ligand>
        <name>S-adenosyl-L-methionine</name>
        <dbReference type="ChEBI" id="CHEBI:59789"/>
    </ligand>
</feature>
<feature type="binding site" evidence="1">
    <location>
        <position position="376"/>
    </location>
    <ligand>
        <name>S-adenosyl-L-methionine</name>
        <dbReference type="ChEBI" id="CHEBI:59789"/>
    </ligand>
</feature>
<name>RLMD_PSYIN</name>
<protein>
    <recommendedName>
        <fullName evidence="1">23S rRNA (uracil(1939)-C(5))-methyltransferase RlmD</fullName>
        <ecNumber evidence="1">2.1.1.190</ecNumber>
    </recommendedName>
    <alternativeName>
        <fullName evidence="1">23S rRNA(m5U1939)-methyltransferase</fullName>
    </alternativeName>
</protein>
<organism>
    <name type="scientific">Psychromonas ingrahamii (strain DSM 17664 / CCUG 51855 / 37)</name>
    <dbReference type="NCBI Taxonomy" id="357804"/>
    <lineage>
        <taxon>Bacteria</taxon>
        <taxon>Pseudomonadati</taxon>
        <taxon>Pseudomonadota</taxon>
        <taxon>Gammaproteobacteria</taxon>
        <taxon>Alteromonadales</taxon>
        <taxon>Psychromonadaceae</taxon>
        <taxon>Psychromonas</taxon>
    </lineage>
</organism>
<comment type="function">
    <text evidence="1">Catalyzes the formation of 5-methyl-uridine at position 1939 (m5U1939) in 23S rRNA.</text>
</comment>
<comment type="catalytic activity">
    <reaction evidence="1">
        <text>uridine(1939) in 23S rRNA + S-adenosyl-L-methionine = 5-methyluridine(1939) in 23S rRNA + S-adenosyl-L-homocysteine + H(+)</text>
        <dbReference type="Rhea" id="RHEA:42908"/>
        <dbReference type="Rhea" id="RHEA-COMP:10278"/>
        <dbReference type="Rhea" id="RHEA-COMP:10279"/>
        <dbReference type="ChEBI" id="CHEBI:15378"/>
        <dbReference type="ChEBI" id="CHEBI:57856"/>
        <dbReference type="ChEBI" id="CHEBI:59789"/>
        <dbReference type="ChEBI" id="CHEBI:65315"/>
        <dbReference type="ChEBI" id="CHEBI:74447"/>
        <dbReference type="EC" id="2.1.1.190"/>
    </reaction>
</comment>
<comment type="similarity">
    <text evidence="1">Belongs to the class I-like SAM-binding methyltransferase superfamily. RNA M5U methyltransferase family. RlmD subfamily.</text>
</comment>